<accession>Q61263</accession>
<accession>Q5XK32</accession>
<accession>Q64180</accession>
<organism>
    <name type="scientific">Mus musculus</name>
    <name type="common">Mouse</name>
    <dbReference type="NCBI Taxonomy" id="10090"/>
    <lineage>
        <taxon>Eukaryota</taxon>
        <taxon>Metazoa</taxon>
        <taxon>Chordata</taxon>
        <taxon>Craniata</taxon>
        <taxon>Vertebrata</taxon>
        <taxon>Euteleostomi</taxon>
        <taxon>Mammalia</taxon>
        <taxon>Eutheria</taxon>
        <taxon>Euarchontoglires</taxon>
        <taxon>Glires</taxon>
        <taxon>Rodentia</taxon>
        <taxon>Myomorpha</taxon>
        <taxon>Muroidea</taxon>
        <taxon>Muridae</taxon>
        <taxon>Murinae</taxon>
        <taxon>Mus</taxon>
        <taxon>Mus</taxon>
    </lineage>
</organism>
<reference key="1">
    <citation type="journal article" date="1995" name="J. Biol. Chem.">
        <title>Tissue-specific expression and cholesterol regulation of acylcoenzyme A:cholesterol acyltransferase (ACAT) in mice. Molecular cloning of mouse ACAT cDNA, chromosomal localization, and regulation of ACAT in vivo and in vitro.</title>
        <authorList>
            <person name="Uelmen P.J."/>
            <person name="Oka K."/>
            <person name="Sullivan M.C."/>
            <person name="Chang T.-Y."/>
            <person name="Chang C.C.Y."/>
            <person name="Chan L."/>
        </authorList>
    </citation>
    <scope>NUCLEOTIDE SEQUENCE [MRNA]</scope>
    <source>
        <tissue>Liver</tissue>
    </source>
</reference>
<reference key="2">
    <citation type="journal article" date="1996" name="Biochem. Biophys. Res. Commun.">
        <title>Cloning and expression in Xenopus oocytes of a mouse homologue of the human acylcoenzyme A: cholesterol acyltransferase and its potential role in metabolism of oxidized LDL.</title>
        <authorList>
            <person name="Green S."/>
            <person name="Steinberg D."/>
            <person name="Quehenberger O."/>
        </authorList>
    </citation>
    <scope>NUCLEOTIDE SEQUENCE [MRNA]</scope>
</reference>
<reference key="3">
    <citation type="journal article" date="2005" name="Science">
        <title>The transcriptional landscape of the mammalian genome.</title>
        <authorList>
            <person name="Carninci P."/>
            <person name="Kasukawa T."/>
            <person name="Katayama S."/>
            <person name="Gough J."/>
            <person name="Frith M.C."/>
            <person name="Maeda N."/>
            <person name="Oyama R."/>
            <person name="Ravasi T."/>
            <person name="Lenhard B."/>
            <person name="Wells C."/>
            <person name="Kodzius R."/>
            <person name="Shimokawa K."/>
            <person name="Bajic V.B."/>
            <person name="Brenner S.E."/>
            <person name="Batalov S."/>
            <person name="Forrest A.R."/>
            <person name="Zavolan M."/>
            <person name="Davis M.J."/>
            <person name="Wilming L.G."/>
            <person name="Aidinis V."/>
            <person name="Allen J.E."/>
            <person name="Ambesi-Impiombato A."/>
            <person name="Apweiler R."/>
            <person name="Aturaliya R.N."/>
            <person name="Bailey T.L."/>
            <person name="Bansal M."/>
            <person name="Baxter L."/>
            <person name="Beisel K.W."/>
            <person name="Bersano T."/>
            <person name="Bono H."/>
            <person name="Chalk A.M."/>
            <person name="Chiu K.P."/>
            <person name="Choudhary V."/>
            <person name="Christoffels A."/>
            <person name="Clutterbuck D.R."/>
            <person name="Crowe M.L."/>
            <person name="Dalla E."/>
            <person name="Dalrymple B.P."/>
            <person name="de Bono B."/>
            <person name="Della Gatta G."/>
            <person name="di Bernardo D."/>
            <person name="Down T."/>
            <person name="Engstrom P."/>
            <person name="Fagiolini M."/>
            <person name="Faulkner G."/>
            <person name="Fletcher C.F."/>
            <person name="Fukushima T."/>
            <person name="Furuno M."/>
            <person name="Futaki S."/>
            <person name="Gariboldi M."/>
            <person name="Georgii-Hemming P."/>
            <person name="Gingeras T.R."/>
            <person name="Gojobori T."/>
            <person name="Green R.E."/>
            <person name="Gustincich S."/>
            <person name="Harbers M."/>
            <person name="Hayashi Y."/>
            <person name="Hensch T.K."/>
            <person name="Hirokawa N."/>
            <person name="Hill D."/>
            <person name="Huminiecki L."/>
            <person name="Iacono M."/>
            <person name="Ikeo K."/>
            <person name="Iwama A."/>
            <person name="Ishikawa T."/>
            <person name="Jakt M."/>
            <person name="Kanapin A."/>
            <person name="Katoh M."/>
            <person name="Kawasawa Y."/>
            <person name="Kelso J."/>
            <person name="Kitamura H."/>
            <person name="Kitano H."/>
            <person name="Kollias G."/>
            <person name="Krishnan S.P."/>
            <person name="Kruger A."/>
            <person name="Kummerfeld S.K."/>
            <person name="Kurochkin I.V."/>
            <person name="Lareau L.F."/>
            <person name="Lazarevic D."/>
            <person name="Lipovich L."/>
            <person name="Liu J."/>
            <person name="Liuni S."/>
            <person name="McWilliam S."/>
            <person name="Madan Babu M."/>
            <person name="Madera M."/>
            <person name="Marchionni L."/>
            <person name="Matsuda H."/>
            <person name="Matsuzawa S."/>
            <person name="Miki H."/>
            <person name="Mignone F."/>
            <person name="Miyake S."/>
            <person name="Morris K."/>
            <person name="Mottagui-Tabar S."/>
            <person name="Mulder N."/>
            <person name="Nakano N."/>
            <person name="Nakauchi H."/>
            <person name="Ng P."/>
            <person name="Nilsson R."/>
            <person name="Nishiguchi S."/>
            <person name="Nishikawa S."/>
            <person name="Nori F."/>
            <person name="Ohara O."/>
            <person name="Okazaki Y."/>
            <person name="Orlando V."/>
            <person name="Pang K.C."/>
            <person name="Pavan W.J."/>
            <person name="Pavesi G."/>
            <person name="Pesole G."/>
            <person name="Petrovsky N."/>
            <person name="Piazza S."/>
            <person name="Reed J."/>
            <person name="Reid J.F."/>
            <person name="Ring B.Z."/>
            <person name="Ringwald M."/>
            <person name="Rost B."/>
            <person name="Ruan Y."/>
            <person name="Salzberg S.L."/>
            <person name="Sandelin A."/>
            <person name="Schneider C."/>
            <person name="Schoenbach C."/>
            <person name="Sekiguchi K."/>
            <person name="Semple C.A."/>
            <person name="Seno S."/>
            <person name="Sessa L."/>
            <person name="Sheng Y."/>
            <person name="Shibata Y."/>
            <person name="Shimada H."/>
            <person name="Shimada K."/>
            <person name="Silva D."/>
            <person name="Sinclair B."/>
            <person name="Sperling S."/>
            <person name="Stupka E."/>
            <person name="Sugiura K."/>
            <person name="Sultana R."/>
            <person name="Takenaka Y."/>
            <person name="Taki K."/>
            <person name="Tammoja K."/>
            <person name="Tan S.L."/>
            <person name="Tang S."/>
            <person name="Taylor M.S."/>
            <person name="Tegner J."/>
            <person name="Teichmann S.A."/>
            <person name="Ueda H.R."/>
            <person name="van Nimwegen E."/>
            <person name="Verardo R."/>
            <person name="Wei C.L."/>
            <person name="Yagi K."/>
            <person name="Yamanishi H."/>
            <person name="Zabarovsky E."/>
            <person name="Zhu S."/>
            <person name="Zimmer A."/>
            <person name="Hide W."/>
            <person name="Bult C."/>
            <person name="Grimmond S.M."/>
            <person name="Teasdale R.D."/>
            <person name="Liu E.T."/>
            <person name="Brusic V."/>
            <person name="Quackenbush J."/>
            <person name="Wahlestedt C."/>
            <person name="Mattick J.S."/>
            <person name="Hume D.A."/>
            <person name="Kai C."/>
            <person name="Sasaki D."/>
            <person name="Tomaru Y."/>
            <person name="Fukuda S."/>
            <person name="Kanamori-Katayama M."/>
            <person name="Suzuki M."/>
            <person name="Aoki J."/>
            <person name="Arakawa T."/>
            <person name="Iida J."/>
            <person name="Imamura K."/>
            <person name="Itoh M."/>
            <person name="Kato T."/>
            <person name="Kawaji H."/>
            <person name="Kawagashira N."/>
            <person name="Kawashima T."/>
            <person name="Kojima M."/>
            <person name="Kondo S."/>
            <person name="Konno H."/>
            <person name="Nakano K."/>
            <person name="Ninomiya N."/>
            <person name="Nishio T."/>
            <person name="Okada M."/>
            <person name="Plessy C."/>
            <person name="Shibata K."/>
            <person name="Shiraki T."/>
            <person name="Suzuki S."/>
            <person name="Tagami M."/>
            <person name="Waki K."/>
            <person name="Watahiki A."/>
            <person name="Okamura-Oho Y."/>
            <person name="Suzuki H."/>
            <person name="Kawai J."/>
            <person name="Hayashizaki Y."/>
        </authorList>
    </citation>
    <scope>NUCLEOTIDE SEQUENCE [LARGE SCALE MRNA]</scope>
    <source>
        <strain>C57BL/6J</strain>
        <tissue>Stomach</tissue>
    </source>
</reference>
<reference key="4">
    <citation type="journal article" date="2004" name="Genome Res.">
        <title>The status, quality, and expansion of the NIH full-length cDNA project: the Mammalian Gene Collection (MGC).</title>
        <authorList>
            <consortium name="The MGC Project Team"/>
        </authorList>
    </citation>
    <scope>NUCLEOTIDE SEQUENCE [LARGE SCALE MRNA]</scope>
    <source>
        <strain>C57BL/6J</strain>
        <tissue>Embryo</tissue>
    </source>
</reference>
<reference key="5">
    <citation type="journal article" date="2000" name="Mol. Biol. Cell">
        <title>ACAT1 and ACAT2 membrane topology segregates a serine residue essential for activity to opposite sides of the endoplasmic reticulum membrane.</title>
        <authorList>
            <person name="Joyce C.W."/>
            <person name="Shelness G.S."/>
            <person name="Davis M.A."/>
            <person name="Lee R.G."/>
            <person name="Skinner K."/>
            <person name="Anderson R.A."/>
            <person name="Rudel L.L."/>
        </authorList>
    </citation>
    <scope>TOPOLOGY</scope>
    <scope>SUBCELLULAR LOCATION</scope>
</reference>
<reference key="6">
    <citation type="journal article" date="2010" name="Cell">
        <title>A tissue-specific atlas of mouse protein phosphorylation and expression.</title>
        <authorList>
            <person name="Huttlin E.L."/>
            <person name="Jedrychowski M.P."/>
            <person name="Elias J.E."/>
            <person name="Goswami T."/>
            <person name="Rad R."/>
            <person name="Beausoleil S.A."/>
            <person name="Villen J."/>
            <person name="Haas W."/>
            <person name="Sowa M.E."/>
            <person name="Gygi S.P."/>
        </authorList>
    </citation>
    <scope>IDENTIFICATION BY MASS SPECTROMETRY [LARGE SCALE ANALYSIS]</scope>
    <source>
        <tissue>Lung</tissue>
        <tissue>Spleen</tissue>
        <tissue>Testis</tissue>
    </source>
</reference>
<proteinExistence type="evidence at protein level"/>
<gene>
    <name evidence="5" type="primary">Soat1</name>
    <name type="synonym">Acact</name>
</gene>
<evidence type="ECO:0000250" key="1">
    <source>
        <dbReference type="UniProtKB" id="P35610"/>
    </source>
</evidence>
<evidence type="ECO:0000256" key="2">
    <source>
        <dbReference type="SAM" id="MobiDB-lite"/>
    </source>
</evidence>
<evidence type="ECO:0000269" key="3">
    <source>
    </source>
</evidence>
<evidence type="ECO:0000305" key="4"/>
<evidence type="ECO:0000312" key="5">
    <source>
        <dbReference type="MGI" id="MGI:104665"/>
    </source>
</evidence>
<comment type="function">
    <text evidence="1">Catalyzes the formation of fatty acid-cholesterol esters, which are less soluble in membranes than cholesterol. Plays a role in lipoprotein assembly and dietary cholesterol absorption. Preferentially utilizes oleoyl-CoA ((9Z)-octadecenoyl-CoA) as a substrate: shows a higher activity towards an acyl-CoA substrate with a double bond at the delta-9 position (9Z) than towards saturated acyl-CoA or an unsaturated acyl-CoA with a double bond at the delta-7 (7Z) or delta-11 (11Z) positions.</text>
</comment>
<comment type="catalytic activity">
    <reaction evidence="1">
        <text>a sterol + a long-chain fatty acyl-CoA = a long-chain 3-hydroxysterol ester + CoA</text>
        <dbReference type="Rhea" id="RHEA:59816"/>
        <dbReference type="ChEBI" id="CHEBI:15889"/>
        <dbReference type="ChEBI" id="CHEBI:57287"/>
        <dbReference type="ChEBI" id="CHEBI:83139"/>
        <dbReference type="ChEBI" id="CHEBI:232093"/>
        <dbReference type="EC" id="2.3.1.26"/>
    </reaction>
    <physiologicalReaction direction="left-to-right" evidence="1">
        <dbReference type="Rhea" id="RHEA:59817"/>
    </physiologicalReaction>
</comment>
<comment type="catalytic activity">
    <reaction evidence="1">
        <text>cholesterol + an acyl-CoA = a cholesterol ester + CoA</text>
        <dbReference type="Rhea" id="RHEA:17729"/>
        <dbReference type="ChEBI" id="CHEBI:16113"/>
        <dbReference type="ChEBI" id="CHEBI:17002"/>
        <dbReference type="ChEBI" id="CHEBI:57287"/>
        <dbReference type="ChEBI" id="CHEBI:58342"/>
    </reaction>
    <physiologicalReaction direction="left-to-right" evidence="1">
        <dbReference type="Rhea" id="RHEA:17730"/>
    </physiologicalReaction>
</comment>
<comment type="catalytic activity">
    <reaction evidence="1">
        <text>cholesterol + (9Z)-octadecenoyl-CoA = cholesteryl (9Z-octadecenoate) + CoA</text>
        <dbReference type="Rhea" id="RHEA:41436"/>
        <dbReference type="ChEBI" id="CHEBI:16113"/>
        <dbReference type="ChEBI" id="CHEBI:46898"/>
        <dbReference type="ChEBI" id="CHEBI:57287"/>
        <dbReference type="ChEBI" id="CHEBI:57387"/>
    </reaction>
    <physiologicalReaction direction="left-to-right" evidence="1">
        <dbReference type="Rhea" id="RHEA:41437"/>
    </physiologicalReaction>
</comment>
<comment type="catalytic activity">
    <reaction evidence="1">
        <text>cholesterol + hexadecanoyl-CoA = cholesteryl hexadecanoate + CoA</text>
        <dbReference type="Rhea" id="RHEA:42792"/>
        <dbReference type="ChEBI" id="CHEBI:3663"/>
        <dbReference type="ChEBI" id="CHEBI:16113"/>
        <dbReference type="ChEBI" id="CHEBI:57287"/>
        <dbReference type="ChEBI" id="CHEBI:57379"/>
    </reaction>
    <physiologicalReaction direction="left-to-right" evidence="1">
        <dbReference type="Rhea" id="RHEA:42793"/>
    </physiologicalReaction>
</comment>
<comment type="catalytic activity">
    <reaction evidence="1">
        <text>octadecanoyl-CoA + cholesterol = cholesteryl octadecanoate + CoA</text>
        <dbReference type="Rhea" id="RHEA:42812"/>
        <dbReference type="ChEBI" id="CHEBI:16113"/>
        <dbReference type="ChEBI" id="CHEBI:57287"/>
        <dbReference type="ChEBI" id="CHEBI:57394"/>
        <dbReference type="ChEBI" id="CHEBI:82750"/>
    </reaction>
    <physiologicalReaction direction="left-to-right" evidence="1">
        <dbReference type="Rhea" id="RHEA:42813"/>
    </physiologicalReaction>
</comment>
<comment type="catalytic activity">
    <reaction evidence="1">
        <text>(9Z,12Z)-octadecadienoyl-CoA + cholesterol = cholesteryl (9Z,12Z)-octadecadienoate + CoA</text>
        <dbReference type="Rhea" id="RHEA:42796"/>
        <dbReference type="ChEBI" id="CHEBI:16113"/>
        <dbReference type="ChEBI" id="CHEBI:41509"/>
        <dbReference type="ChEBI" id="CHEBI:57287"/>
        <dbReference type="ChEBI" id="CHEBI:57383"/>
    </reaction>
    <physiologicalReaction direction="left-to-right" evidence="1">
        <dbReference type="Rhea" id="RHEA:42797"/>
    </physiologicalReaction>
</comment>
<comment type="catalytic activity">
    <reaction evidence="1">
        <text>(5Z,8Z,11Z,14Z)-eicosatetraenoyl-CoA + cholesterol = cholesteryl (5Z,8Z,11Z,14Z)-eicosatetraenoate + CoA</text>
        <dbReference type="Rhea" id="RHEA:42816"/>
        <dbReference type="ChEBI" id="CHEBI:16113"/>
        <dbReference type="ChEBI" id="CHEBI:57287"/>
        <dbReference type="ChEBI" id="CHEBI:57368"/>
        <dbReference type="ChEBI" id="CHEBI:82751"/>
    </reaction>
    <physiologicalReaction direction="left-to-right" evidence="1">
        <dbReference type="Rhea" id="RHEA:42817"/>
    </physiologicalReaction>
</comment>
<comment type="catalytic activity">
    <reaction evidence="1">
        <text>(9Z)-hexadecenoyl-CoA + cholesterol = cholesteryl (9Z)-hexadecenoate + CoA</text>
        <dbReference type="Rhea" id="RHEA:64320"/>
        <dbReference type="ChEBI" id="CHEBI:16113"/>
        <dbReference type="ChEBI" id="CHEBI:57287"/>
        <dbReference type="ChEBI" id="CHEBI:61540"/>
        <dbReference type="ChEBI" id="CHEBI:84323"/>
    </reaction>
    <physiologicalReaction direction="left-to-right" evidence="1">
        <dbReference type="Rhea" id="RHEA:64321"/>
    </physiologicalReaction>
</comment>
<comment type="catalytic activity">
    <reaction evidence="1">
        <text>(11Z)-octadecenoyl-CoA + cholesterol = cholesteryl (11Z)-octadecenoate + CoA</text>
        <dbReference type="Rhea" id="RHEA:64324"/>
        <dbReference type="ChEBI" id="CHEBI:16113"/>
        <dbReference type="ChEBI" id="CHEBI:57287"/>
        <dbReference type="ChEBI" id="CHEBI:75121"/>
        <dbReference type="ChEBI" id="CHEBI:88768"/>
    </reaction>
    <physiologicalReaction direction="left-to-right" evidence="1">
        <dbReference type="Rhea" id="RHEA:64325"/>
    </physiologicalReaction>
</comment>
<comment type="catalytic activity">
    <reaction evidence="1">
        <text>(7Z)-octadecenoyl-CoA + cholesterol = cholesteryl (7Z)-octadecenoate + CoA</text>
        <dbReference type="Rhea" id="RHEA:64328"/>
        <dbReference type="ChEBI" id="CHEBI:16113"/>
        <dbReference type="ChEBI" id="CHEBI:57287"/>
        <dbReference type="ChEBI" id="CHEBI:152049"/>
        <dbReference type="ChEBI" id="CHEBI:152050"/>
    </reaction>
    <physiologicalReaction direction="left-to-right" evidence="1">
        <dbReference type="Rhea" id="RHEA:64329"/>
    </physiologicalReaction>
</comment>
<comment type="subunit">
    <text evidence="1">May form homo- or heterodimers. Interacts with UBIAD1.</text>
</comment>
<comment type="subcellular location">
    <subcellularLocation>
        <location evidence="3">Endoplasmic reticulum membrane</location>
        <topology evidence="3">Multi-pass membrane protein</topology>
    </subcellularLocation>
</comment>
<comment type="domain">
    <text evidence="1">Each protomer consists of 9 transmembrane segments, which enclose a cytosolic tunnel and a transmembrane tunnel that converge at the predicted catalytic site: acyl-CoA enters the active site through the cytosolic tunnel, whereas cholesterol enters from the side through the transmembrane tunnel.</text>
</comment>
<comment type="similarity">
    <text evidence="4">Belongs to the membrane-bound acyltransferase family. Sterol o-acyltransferase subfamily.</text>
</comment>
<feature type="chain" id="PRO_0000207642" description="Sterol O-acyltransferase 1">
    <location>
        <begin position="1"/>
        <end position="540"/>
    </location>
</feature>
<feature type="topological domain" description="Cytoplasmic" evidence="4">
    <location>
        <begin position="1"/>
        <end position="128"/>
    </location>
</feature>
<feature type="transmembrane region" description="Helical; Name=1" evidence="1">
    <location>
        <begin position="129"/>
        <end position="150"/>
    </location>
</feature>
<feature type="topological domain" description="Lumenal" evidence="4">
    <location>
        <begin position="151"/>
        <end position="170"/>
    </location>
</feature>
<feature type="transmembrane region" description="Helical; Name=2" evidence="1">
    <location>
        <begin position="171"/>
        <end position="196"/>
    </location>
</feature>
<feature type="topological domain" description="Cytoplasmic" evidence="4">
    <location>
        <begin position="197"/>
        <end position="208"/>
    </location>
</feature>
<feature type="transmembrane region" description="Helical; Name=3" evidence="1">
    <location>
        <begin position="209"/>
        <end position="234"/>
    </location>
</feature>
<feature type="topological domain" description="Lumenal" evidence="4">
    <location>
        <begin position="235"/>
        <end position="242"/>
    </location>
</feature>
<feature type="transmembrane region" description="Helical; Name=4" evidence="1">
    <location>
        <begin position="243"/>
        <end position="266"/>
    </location>
</feature>
<feature type="topological domain" description="Cytoplasmic" evidence="4">
    <location>
        <begin position="267"/>
        <end position="309"/>
    </location>
</feature>
<feature type="transmembrane region" description="Helical; Name=5" evidence="1">
    <location>
        <begin position="310"/>
        <end position="342"/>
    </location>
</feature>
<feature type="topological domain" description="Lumenal" evidence="4">
    <location>
        <begin position="343"/>
        <end position="359"/>
    </location>
</feature>
<feature type="transmembrane region" description="Helical; Name=6" evidence="1">
    <location>
        <begin position="360"/>
        <end position="385"/>
    </location>
</feature>
<feature type="topological domain" description="Cytoplasmic" evidence="4">
    <location>
        <begin position="386"/>
        <end position="433"/>
    </location>
</feature>
<feature type="transmembrane region" description="Helical; Name=7" evidence="1">
    <location>
        <begin position="434"/>
        <end position="458"/>
    </location>
</feature>
<feature type="topological domain" description="Lumenal" evidence="4">
    <location>
        <begin position="459"/>
        <end position="464"/>
    </location>
</feature>
<feature type="transmembrane region" description="Helical; Name=8" evidence="1">
    <location>
        <begin position="465"/>
        <end position="480"/>
    </location>
</feature>
<feature type="topological domain" description="Cytoplasmic" evidence="4">
    <location>
        <begin position="481"/>
        <end position="486"/>
    </location>
</feature>
<feature type="transmembrane region" description="Helical; Name=9" evidence="1">
    <location>
        <begin position="487"/>
        <end position="518"/>
    </location>
</feature>
<feature type="topological domain" description="Lumenal" evidence="4">
    <location>
        <begin position="519"/>
        <end position="540"/>
    </location>
</feature>
<feature type="region of interest" description="Disordered" evidence="2">
    <location>
        <begin position="1"/>
        <end position="20"/>
    </location>
</feature>
<feature type="short sequence motif" description="FYXDWWN motif" evidence="1">
    <location>
        <begin position="393"/>
        <end position="399"/>
    </location>
</feature>
<feature type="active site" evidence="1">
    <location>
        <position position="450"/>
    </location>
</feature>
<feature type="binding site" evidence="1">
    <location>
        <position position="127"/>
    </location>
    <ligand>
        <name>cholesterol</name>
        <dbReference type="ChEBI" id="CHEBI:16113"/>
    </ligand>
</feature>
<feature type="binding site" evidence="1">
    <location>
        <position position="405"/>
    </location>
    <ligand>
        <name>an acyl-CoA</name>
        <dbReference type="ChEBI" id="CHEBI:58342"/>
    </ligand>
</feature>
<feature type="binding site" evidence="1">
    <location>
        <position position="408"/>
    </location>
    <ligand>
        <name>an acyl-CoA</name>
        <dbReference type="ChEBI" id="CHEBI:58342"/>
    </ligand>
</feature>
<feature type="binding site" evidence="1">
    <location>
        <position position="411"/>
    </location>
    <ligand>
        <name>an acyl-CoA</name>
        <dbReference type="ChEBI" id="CHEBI:58342"/>
    </ligand>
</feature>
<feature type="binding site" evidence="1">
    <location>
        <position position="415"/>
    </location>
    <ligand>
        <name>an acyl-CoA</name>
        <dbReference type="ChEBI" id="CHEBI:58342"/>
    </ligand>
</feature>
<feature type="binding site" evidence="1">
    <location>
        <position position="423"/>
    </location>
    <ligand>
        <name>an acyl-CoA</name>
        <dbReference type="ChEBI" id="CHEBI:58342"/>
    </ligand>
</feature>
<feature type="binding site" evidence="1">
    <location>
        <position position="435"/>
    </location>
    <ligand>
        <name>an acyl-CoA</name>
        <dbReference type="ChEBI" id="CHEBI:58342"/>
    </ligand>
</feature>
<feature type="binding site" evidence="1">
    <location>
        <position position="446"/>
    </location>
    <ligand>
        <name>an acyl-CoA</name>
        <dbReference type="ChEBI" id="CHEBI:58342"/>
    </ligand>
</feature>
<feature type="modified residue" description="Phosphoserine" evidence="1">
    <location>
        <position position="2"/>
    </location>
</feature>
<feature type="disulfide bond" evidence="1">
    <location>
        <begin position="518"/>
        <end position="536"/>
    </location>
</feature>
<feature type="sequence conflict" description="In Ref. 1; AAC42075." evidence="4" ref="1">
    <original>R</original>
    <variation>P</variation>
    <location>
        <position position="195"/>
    </location>
</feature>
<name>SOAT1_MOUSE</name>
<protein>
    <recommendedName>
        <fullName evidence="4">Sterol O-acyltransferase 1</fullName>
        <ecNumber evidence="1">2.3.1.26</ecNumber>
    </recommendedName>
    <alternativeName>
        <fullName>Acyl-coenzyme A:cholesterol acyltransferase 1</fullName>
        <shortName>ACAT-1</shortName>
    </alternativeName>
    <alternativeName>
        <fullName>Cholesterol acyltransferase 1</fullName>
    </alternativeName>
</protein>
<keyword id="KW-0012">Acyltransferase</keyword>
<keyword id="KW-0153">Cholesterol metabolism</keyword>
<keyword id="KW-1015">Disulfide bond</keyword>
<keyword id="KW-0256">Endoplasmic reticulum</keyword>
<keyword id="KW-0443">Lipid metabolism</keyword>
<keyword id="KW-0472">Membrane</keyword>
<keyword id="KW-0597">Phosphoprotein</keyword>
<keyword id="KW-1185">Reference proteome</keyword>
<keyword id="KW-0753">Steroid metabolism</keyword>
<keyword id="KW-1207">Sterol metabolism</keyword>
<keyword id="KW-0808">Transferase</keyword>
<keyword id="KW-0812">Transmembrane</keyword>
<keyword id="KW-1133">Transmembrane helix</keyword>
<sequence length="540" mass="63799">MSLRNRLSKSGENPEQDEAQKNFMDTYRNGHITMKQLIAKKRLLAAEAEELKPLFMKEVGCHFDDFVTNLIEKSASLDNGGCALTTFSILEEMKKNHRAKDLRAPPEQGKIFISRQSLLDELFEVDHIRTIYHMFIALLILFVLSTIVVDYIDEGRLVLEFNLLAYAFGKFPTVIWTWWAMFLSTLSIPYFLFQRWAHGYSKSSHPLIYSLVHGLLFLVFQLGVLGFVPTYVVLAYTLPPASRFILILEQIRLIMKAHSFVRENIPRVLNAAKEKSSKDPLPTVNQYLYFLFAPTLIYRDNYPRTPTVRWGYVAMQFLQVFGCLFYVYYIFERLCAPLFRNIKQEPFSARVLVLCVFNSILPGVLILFLSFFAFLHCWLNAFAEMLRFGDRMFYKDWWNSTSYSNYYRTWNVVVHDWLYYYVYKDLLWFFSKRFKSAAMLAVFALSAVVHEYALAICLSYFYPVLFVLFMFFGMAFNFIVNDSRKRPIWNIMVWASLFLGYGLILCFYSQEWYARQHCPLKNPTFLDYVRPRTWTCRYVF</sequence>
<dbReference type="EC" id="2.3.1.26" evidence="1"/>
<dbReference type="EMBL" id="L42293">
    <property type="protein sequence ID" value="AAC42075.1"/>
    <property type="molecule type" value="mRNA"/>
</dbReference>
<dbReference type="EMBL" id="S81092">
    <property type="protein sequence ID" value="AAB36050.1"/>
    <property type="molecule type" value="mRNA"/>
</dbReference>
<dbReference type="EMBL" id="AK142486">
    <property type="protein sequence ID" value="BAE25081.1"/>
    <property type="molecule type" value="mRNA"/>
</dbReference>
<dbReference type="EMBL" id="AK159393">
    <property type="protein sequence ID" value="BAE35047.1"/>
    <property type="molecule type" value="mRNA"/>
</dbReference>
<dbReference type="EMBL" id="AK159529">
    <property type="protein sequence ID" value="BAE35158.1"/>
    <property type="molecule type" value="mRNA"/>
</dbReference>
<dbReference type="EMBL" id="AK160017">
    <property type="protein sequence ID" value="BAE35563.1"/>
    <property type="molecule type" value="mRNA"/>
</dbReference>
<dbReference type="EMBL" id="BC083092">
    <property type="protein sequence ID" value="AAH83092.1"/>
    <property type="molecule type" value="mRNA"/>
</dbReference>
<dbReference type="CCDS" id="CCDS35743.1"/>
<dbReference type="PIR" id="I49454">
    <property type="entry name" value="I49454"/>
</dbReference>
<dbReference type="RefSeq" id="NP_033256.2">
    <property type="nucleotide sequence ID" value="NM_009230.3"/>
</dbReference>
<dbReference type="SMR" id="Q61263"/>
<dbReference type="BioGRID" id="203385">
    <property type="interactions" value="7"/>
</dbReference>
<dbReference type="FunCoup" id="Q61263">
    <property type="interactions" value="1232"/>
</dbReference>
<dbReference type="IntAct" id="Q61263">
    <property type="interactions" value="17"/>
</dbReference>
<dbReference type="STRING" id="10090.ENSMUSP00000140721"/>
<dbReference type="BindingDB" id="Q61263"/>
<dbReference type="ChEMBL" id="CHEMBL4464"/>
<dbReference type="iPTMnet" id="Q61263"/>
<dbReference type="PhosphoSitePlus" id="Q61263"/>
<dbReference type="SwissPalm" id="Q61263"/>
<dbReference type="PaxDb" id="10090-ENSMUSP00000140721"/>
<dbReference type="ProteomicsDB" id="261474"/>
<dbReference type="Pumba" id="Q61263"/>
<dbReference type="Antibodypedia" id="4027">
    <property type="antibodies" value="178 antibodies from 30 providers"/>
</dbReference>
<dbReference type="DNASU" id="20652"/>
<dbReference type="Ensembl" id="ENSMUST00000051396.13">
    <property type="protein sequence ID" value="ENSMUSP00000058344.7"/>
    <property type="gene ID" value="ENSMUSG00000026600.13"/>
</dbReference>
<dbReference type="Ensembl" id="ENSMUST00000189661.7">
    <property type="protein sequence ID" value="ENSMUSP00000140721.2"/>
    <property type="gene ID" value="ENSMUSG00000026600.13"/>
</dbReference>
<dbReference type="GeneID" id="20652"/>
<dbReference type="KEGG" id="mmu:20652"/>
<dbReference type="UCSC" id="uc007dcj.1">
    <property type="organism name" value="mouse"/>
</dbReference>
<dbReference type="AGR" id="MGI:104665"/>
<dbReference type="CTD" id="6646"/>
<dbReference type="MGI" id="MGI:104665">
    <property type="gene designation" value="Soat1"/>
</dbReference>
<dbReference type="VEuPathDB" id="HostDB:ENSMUSG00000026600"/>
<dbReference type="eggNOG" id="KOG0380">
    <property type="taxonomic scope" value="Eukaryota"/>
</dbReference>
<dbReference type="GeneTree" id="ENSGT00950000183081"/>
<dbReference type="HOGENOM" id="CLU_031845_1_0_1"/>
<dbReference type="InParanoid" id="Q61263"/>
<dbReference type="OMA" id="SCMIEDV"/>
<dbReference type="OrthoDB" id="10039049at2759"/>
<dbReference type="PhylomeDB" id="Q61263"/>
<dbReference type="TreeFam" id="TF105767"/>
<dbReference type="BRENDA" id="2.3.1.26">
    <property type="organism ID" value="3474"/>
</dbReference>
<dbReference type="Reactome" id="R-MMU-8964038">
    <property type="pathway name" value="LDL clearance"/>
</dbReference>
<dbReference type="BioGRID-ORCS" id="20652">
    <property type="hits" value="2 hits in 78 CRISPR screens"/>
</dbReference>
<dbReference type="ChiTaRS" id="Soat1">
    <property type="organism name" value="mouse"/>
</dbReference>
<dbReference type="PRO" id="PR:Q61263"/>
<dbReference type="Proteomes" id="UP000000589">
    <property type="component" value="Chromosome 1"/>
</dbReference>
<dbReference type="RNAct" id="Q61263">
    <property type="molecule type" value="protein"/>
</dbReference>
<dbReference type="Bgee" id="ENSMUSG00000026600">
    <property type="expression patterns" value="Expressed in metanephric ureteric bud and 253 other cell types or tissues"/>
</dbReference>
<dbReference type="ExpressionAtlas" id="Q61263">
    <property type="expression patterns" value="baseline and differential"/>
</dbReference>
<dbReference type="GO" id="GO:0005789">
    <property type="term" value="C:endoplasmic reticulum membrane"/>
    <property type="evidence" value="ECO:0007669"/>
    <property type="project" value="UniProtKB-SubCell"/>
</dbReference>
<dbReference type="GO" id="GO:0016020">
    <property type="term" value="C:membrane"/>
    <property type="evidence" value="ECO:0000266"/>
    <property type="project" value="MGI"/>
</dbReference>
<dbReference type="GO" id="GO:0015485">
    <property type="term" value="F:cholesterol binding"/>
    <property type="evidence" value="ECO:0000250"/>
    <property type="project" value="UniProtKB"/>
</dbReference>
<dbReference type="GO" id="GO:0034736">
    <property type="term" value="F:cholesterol O-acyltransferase activity"/>
    <property type="evidence" value="ECO:0000250"/>
    <property type="project" value="UniProtKB"/>
</dbReference>
<dbReference type="GO" id="GO:0000062">
    <property type="term" value="F:fatty-acyl-CoA binding"/>
    <property type="evidence" value="ECO:0007669"/>
    <property type="project" value="Ensembl"/>
</dbReference>
<dbReference type="GO" id="GO:0004772">
    <property type="term" value="F:sterol O-acyltransferase activity"/>
    <property type="evidence" value="ECO:0000314"/>
    <property type="project" value="MGI"/>
</dbReference>
<dbReference type="GO" id="GO:0033344">
    <property type="term" value="P:cholesterol efflux"/>
    <property type="evidence" value="ECO:0007669"/>
    <property type="project" value="Ensembl"/>
</dbReference>
<dbReference type="GO" id="GO:0042632">
    <property type="term" value="P:cholesterol homeostasis"/>
    <property type="evidence" value="ECO:0000250"/>
    <property type="project" value="UniProtKB"/>
</dbReference>
<dbReference type="GO" id="GO:0008203">
    <property type="term" value="P:cholesterol metabolic process"/>
    <property type="evidence" value="ECO:0000314"/>
    <property type="project" value="MGI"/>
</dbReference>
<dbReference type="GO" id="GO:0010878">
    <property type="term" value="P:cholesterol storage"/>
    <property type="evidence" value="ECO:0007669"/>
    <property type="project" value="Ensembl"/>
</dbReference>
<dbReference type="GO" id="GO:0010742">
    <property type="term" value="P:macrophage derived foam cell differentiation"/>
    <property type="evidence" value="ECO:0007669"/>
    <property type="project" value="Ensembl"/>
</dbReference>
<dbReference type="GO" id="GO:0042986">
    <property type="term" value="P:positive regulation of amyloid precursor protein biosynthetic process"/>
    <property type="evidence" value="ECO:0007669"/>
    <property type="project" value="Ensembl"/>
</dbReference>
<dbReference type="GO" id="GO:0034379">
    <property type="term" value="P:very-low-density lipoprotein particle assembly"/>
    <property type="evidence" value="ECO:0007669"/>
    <property type="project" value="Ensembl"/>
</dbReference>
<dbReference type="InterPro" id="IPR004299">
    <property type="entry name" value="MBOAT_fam"/>
</dbReference>
<dbReference type="InterPro" id="IPR014371">
    <property type="entry name" value="Oat_ACAT_DAG_ARE"/>
</dbReference>
<dbReference type="InterPro" id="IPR030687">
    <property type="entry name" value="Sterol_acyltranf_meta"/>
</dbReference>
<dbReference type="PANTHER" id="PTHR10408">
    <property type="entry name" value="STEROL O-ACYLTRANSFERASE"/>
    <property type="match status" value="1"/>
</dbReference>
<dbReference type="PANTHER" id="PTHR10408:SF6">
    <property type="entry name" value="STEROL O-ACYLTRANSFERASE 1"/>
    <property type="match status" value="1"/>
</dbReference>
<dbReference type="Pfam" id="PF03062">
    <property type="entry name" value="MBOAT"/>
    <property type="match status" value="1"/>
</dbReference>
<dbReference type="PIRSF" id="PIRSF000439">
    <property type="entry name" value="Oat_ACAT_DAG_ARE"/>
    <property type="match status" value="1"/>
</dbReference>
<dbReference type="PIRSF" id="PIRSF500230">
    <property type="entry name" value="Sterol_acyltranf_ACAT"/>
    <property type="match status" value="1"/>
</dbReference>